<sequence>MAGRAVVKGVGHYLPERVVPNAAFEKTLDTTDEWIRSRSGIERRHFAAEGETTSDLATRAAEAALADAGISAEQIDAIVLATSTADLTFPSAATMVQARLGMTNGYAFDVQAVCAGFVYALSNANALIVSGQAKRVLVIGAETFSRIMDWTDRSTCVLFGDGAGALVLEYEEGEGTPQDRGILSVDLNSDGRYKDLLYVDGGVSTQTTGHLRMQGNQVFRHAVEKLAQTAETALDKAGLSSADVDWIVPHQANIRIIQGTAKKMGLPMDKVVVTVQDHGNTSAASIPLALSVGKARGQIKTGDLVVTEAIGGGLAWGAVVLRW</sequence>
<keyword id="KW-0012">Acyltransferase</keyword>
<keyword id="KW-0963">Cytoplasm</keyword>
<keyword id="KW-0275">Fatty acid biosynthesis</keyword>
<keyword id="KW-0276">Fatty acid metabolism</keyword>
<keyword id="KW-0444">Lipid biosynthesis</keyword>
<keyword id="KW-0443">Lipid metabolism</keyword>
<keyword id="KW-0511">Multifunctional enzyme</keyword>
<keyword id="KW-1185">Reference proteome</keyword>
<keyword id="KW-0808">Transferase</keyword>
<evidence type="ECO:0000255" key="1">
    <source>
        <dbReference type="HAMAP-Rule" id="MF_01815"/>
    </source>
</evidence>
<protein>
    <recommendedName>
        <fullName evidence="1">Beta-ketoacyl-[acyl-carrier-protein] synthase III</fullName>
        <shortName evidence="1">Beta-ketoacyl-ACP synthase III</shortName>
        <shortName evidence="1">KAS III</shortName>
        <ecNumber evidence="1">2.3.1.180</ecNumber>
    </recommendedName>
    <alternativeName>
        <fullName evidence="1">3-oxoacyl-[acyl-carrier-protein] synthase 3</fullName>
    </alternativeName>
    <alternativeName>
        <fullName evidence="1">3-oxoacyl-[acyl-carrier-protein] synthase III</fullName>
    </alternativeName>
</protein>
<dbReference type="EC" id="2.3.1.180" evidence="1"/>
<dbReference type="EMBL" id="CP000031">
    <property type="protein sequence ID" value="AAV95745.1"/>
    <property type="molecule type" value="Genomic_DNA"/>
</dbReference>
<dbReference type="RefSeq" id="WP_011048202.1">
    <property type="nucleotide sequence ID" value="NC_003911.12"/>
</dbReference>
<dbReference type="SMR" id="Q5LQJ5"/>
<dbReference type="STRING" id="246200.SPO2494"/>
<dbReference type="PaxDb" id="246200-SPO2494"/>
<dbReference type="KEGG" id="sil:SPO2494"/>
<dbReference type="eggNOG" id="COG0332">
    <property type="taxonomic scope" value="Bacteria"/>
</dbReference>
<dbReference type="HOGENOM" id="CLU_039592_3_1_5"/>
<dbReference type="OrthoDB" id="9815506at2"/>
<dbReference type="UniPathway" id="UPA00094"/>
<dbReference type="Proteomes" id="UP000001023">
    <property type="component" value="Chromosome"/>
</dbReference>
<dbReference type="GO" id="GO:0005737">
    <property type="term" value="C:cytoplasm"/>
    <property type="evidence" value="ECO:0007669"/>
    <property type="project" value="UniProtKB-SubCell"/>
</dbReference>
<dbReference type="GO" id="GO:0004315">
    <property type="term" value="F:3-oxoacyl-[acyl-carrier-protein] synthase activity"/>
    <property type="evidence" value="ECO:0007669"/>
    <property type="project" value="InterPro"/>
</dbReference>
<dbReference type="GO" id="GO:0033818">
    <property type="term" value="F:beta-ketoacyl-acyl-carrier-protein synthase III activity"/>
    <property type="evidence" value="ECO:0007669"/>
    <property type="project" value="UniProtKB-UniRule"/>
</dbReference>
<dbReference type="GO" id="GO:0006633">
    <property type="term" value="P:fatty acid biosynthetic process"/>
    <property type="evidence" value="ECO:0007669"/>
    <property type="project" value="UniProtKB-UniRule"/>
</dbReference>
<dbReference type="GO" id="GO:0044550">
    <property type="term" value="P:secondary metabolite biosynthetic process"/>
    <property type="evidence" value="ECO:0007669"/>
    <property type="project" value="TreeGrafter"/>
</dbReference>
<dbReference type="CDD" id="cd00830">
    <property type="entry name" value="KAS_III"/>
    <property type="match status" value="1"/>
</dbReference>
<dbReference type="FunFam" id="3.40.47.10:FF:000004">
    <property type="entry name" value="3-oxoacyl-[acyl-carrier-protein] synthase 3"/>
    <property type="match status" value="1"/>
</dbReference>
<dbReference type="Gene3D" id="3.40.47.10">
    <property type="match status" value="1"/>
</dbReference>
<dbReference type="HAMAP" id="MF_01815">
    <property type="entry name" value="FabH"/>
    <property type="match status" value="1"/>
</dbReference>
<dbReference type="InterPro" id="IPR013747">
    <property type="entry name" value="ACP_syn_III_C"/>
</dbReference>
<dbReference type="InterPro" id="IPR013751">
    <property type="entry name" value="ACP_syn_III_N"/>
</dbReference>
<dbReference type="InterPro" id="IPR004655">
    <property type="entry name" value="FabH"/>
</dbReference>
<dbReference type="InterPro" id="IPR016039">
    <property type="entry name" value="Thiolase-like"/>
</dbReference>
<dbReference type="NCBIfam" id="TIGR00747">
    <property type="entry name" value="fabH"/>
    <property type="match status" value="1"/>
</dbReference>
<dbReference type="NCBIfam" id="NF006829">
    <property type="entry name" value="PRK09352.1"/>
    <property type="match status" value="1"/>
</dbReference>
<dbReference type="PANTHER" id="PTHR34069">
    <property type="entry name" value="3-OXOACYL-[ACYL-CARRIER-PROTEIN] SYNTHASE 3"/>
    <property type="match status" value="1"/>
</dbReference>
<dbReference type="PANTHER" id="PTHR34069:SF2">
    <property type="entry name" value="BETA-KETOACYL-[ACYL-CARRIER-PROTEIN] SYNTHASE III"/>
    <property type="match status" value="1"/>
</dbReference>
<dbReference type="Pfam" id="PF08545">
    <property type="entry name" value="ACP_syn_III"/>
    <property type="match status" value="1"/>
</dbReference>
<dbReference type="Pfam" id="PF08541">
    <property type="entry name" value="ACP_syn_III_C"/>
    <property type="match status" value="1"/>
</dbReference>
<dbReference type="SUPFAM" id="SSF53901">
    <property type="entry name" value="Thiolase-like"/>
    <property type="match status" value="1"/>
</dbReference>
<comment type="function">
    <text evidence="1">Catalyzes the condensation reaction of fatty acid synthesis by the addition to an acyl acceptor of two carbons from malonyl-ACP. Catalyzes the first condensation reaction which initiates fatty acid synthesis and may therefore play a role in governing the total rate of fatty acid production. Possesses both acetoacetyl-ACP synthase and acetyl transacylase activities. Its substrate specificity determines the biosynthesis of branched-chain and/or straight-chain of fatty acids.</text>
</comment>
<comment type="catalytic activity">
    <reaction evidence="1">
        <text>malonyl-[ACP] + acetyl-CoA + H(+) = 3-oxobutanoyl-[ACP] + CO2 + CoA</text>
        <dbReference type="Rhea" id="RHEA:12080"/>
        <dbReference type="Rhea" id="RHEA-COMP:9623"/>
        <dbReference type="Rhea" id="RHEA-COMP:9625"/>
        <dbReference type="ChEBI" id="CHEBI:15378"/>
        <dbReference type="ChEBI" id="CHEBI:16526"/>
        <dbReference type="ChEBI" id="CHEBI:57287"/>
        <dbReference type="ChEBI" id="CHEBI:57288"/>
        <dbReference type="ChEBI" id="CHEBI:78449"/>
        <dbReference type="ChEBI" id="CHEBI:78450"/>
        <dbReference type="EC" id="2.3.1.180"/>
    </reaction>
</comment>
<comment type="pathway">
    <text evidence="1">Lipid metabolism; fatty acid biosynthesis.</text>
</comment>
<comment type="subunit">
    <text evidence="1">Homodimer.</text>
</comment>
<comment type="subcellular location">
    <subcellularLocation>
        <location evidence="1">Cytoplasm</location>
    </subcellularLocation>
</comment>
<comment type="domain">
    <text evidence="1">The last Arg residue of the ACP-binding site is essential for the weak association between ACP/AcpP and FabH.</text>
</comment>
<comment type="similarity">
    <text evidence="1">Belongs to the thiolase-like superfamily. FabH family.</text>
</comment>
<reference key="1">
    <citation type="journal article" date="2004" name="Nature">
        <title>Genome sequence of Silicibacter pomeroyi reveals adaptations to the marine environment.</title>
        <authorList>
            <person name="Moran M.A."/>
            <person name="Buchan A."/>
            <person name="Gonzalez J.M."/>
            <person name="Heidelberg J.F."/>
            <person name="Whitman W.B."/>
            <person name="Kiene R.P."/>
            <person name="Henriksen J.R."/>
            <person name="King G.M."/>
            <person name="Belas R."/>
            <person name="Fuqua C."/>
            <person name="Brinkac L.M."/>
            <person name="Lewis M."/>
            <person name="Johri S."/>
            <person name="Weaver B."/>
            <person name="Pai G."/>
            <person name="Eisen J.A."/>
            <person name="Rahe E."/>
            <person name="Sheldon W.M."/>
            <person name="Ye W."/>
            <person name="Miller T.R."/>
            <person name="Carlton J."/>
            <person name="Rasko D.A."/>
            <person name="Paulsen I.T."/>
            <person name="Ren Q."/>
            <person name="Daugherty S.C."/>
            <person name="DeBoy R.T."/>
            <person name="Dodson R.J."/>
            <person name="Durkin A.S."/>
            <person name="Madupu R."/>
            <person name="Nelson W.C."/>
            <person name="Sullivan S.A."/>
            <person name="Rosovitz M.J."/>
            <person name="Haft D.H."/>
            <person name="Selengut J."/>
            <person name="Ward N."/>
        </authorList>
    </citation>
    <scope>NUCLEOTIDE SEQUENCE [LARGE SCALE GENOMIC DNA]</scope>
    <source>
        <strain>ATCC 700808 / DSM 15171 / DSS-3</strain>
    </source>
</reference>
<reference key="2">
    <citation type="journal article" date="2014" name="Stand. Genomic Sci.">
        <title>An updated genome annotation for the model marine bacterium Ruegeria pomeroyi DSS-3.</title>
        <authorList>
            <person name="Rivers A.R."/>
            <person name="Smith C.B."/>
            <person name="Moran M.A."/>
        </authorList>
    </citation>
    <scope>GENOME REANNOTATION</scope>
    <source>
        <strain>ATCC 700808 / DSM 15171 / DSS-3</strain>
    </source>
</reference>
<gene>
    <name evidence="1" type="primary">fabH</name>
    <name type="ordered locus">SPO2494</name>
</gene>
<proteinExistence type="inferred from homology"/>
<feature type="chain" id="PRO_1000056410" description="Beta-ketoacyl-[acyl-carrier-protein] synthase III">
    <location>
        <begin position="1"/>
        <end position="323"/>
    </location>
</feature>
<feature type="region of interest" description="ACP-binding" evidence="1">
    <location>
        <begin position="251"/>
        <end position="255"/>
    </location>
</feature>
<feature type="active site" evidence="1">
    <location>
        <position position="114"/>
    </location>
</feature>
<feature type="active site" evidence="1">
    <location>
        <position position="250"/>
    </location>
</feature>
<feature type="active site" evidence="1">
    <location>
        <position position="280"/>
    </location>
</feature>
<accession>Q5LQJ5</accession>
<name>FABH_RUEPO</name>
<organism>
    <name type="scientific">Ruegeria pomeroyi (strain ATCC 700808 / DSM 15171 / DSS-3)</name>
    <name type="common">Silicibacter pomeroyi</name>
    <dbReference type="NCBI Taxonomy" id="246200"/>
    <lineage>
        <taxon>Bacteria</taxon>
        <taxon>Pseudomonadati</taxon>
        <taxon>Pseudomonadota</taxon>
        <taxon>Alphaproteobacteria</taxon>
        <taxon>Rhodobacterales</taxon>
        <taxon>Roseobacteraceae</taxon>
        <taxon>Ruegeria</taxon>
    </lineage>
</organism>